<feature type="chain" id="PRO_0000274392" description="U6 snRNA phosphodiesterase 1">
    <location>
        <begin position="1"/>
        <end position="267"/>
    </location>
</feature>
<feature type="region of interest" description="Disordered" evidence="3">
    <location>
        <begin position="1"/>
        <end position="74"/>
    </location>
</feature>
<feature type="compositionally biased region" description="Polar residues" evidence="3">
    <location>
        <begin position="1"/>
        <end position="13"/>
    </location>
</feature>
<feature type="active site" description="Proton acceptor" evidence="2">
    <location>
        <position position="122"/>
    </location>
</feature>
<feature type="active site" description="Proton donor" evidence="2">
    <location>
        <position position="210"/>
    </location>
</feature>
<feature type="binding site" evidence="1">
    <location>
        <begin position="122"/>
        <end position="124"/>
    </location>
    <ligand>
        <name>AMP</name>
        <dbReference type="ChEBI" id="CHEBI:456215"/>
    </ligand>
</feature>
<feature type="binding site" evidence="1">
    <location>
        <position position="166"/>
    </location>
    <ligand>
        <name>UMP</name>
        <dbReference type="ChEBI" id="CHEBI:57865"/>
    </ligand>
</feature>
<feature type="binding site" evidence="1">
    <location>
        <position position="204"/>
    </location>
    <ligand>
        <name>AMP</name>
        <dbReference type="ChEBI" id="CHEBI:456215"/>
    </ligand>
</feature>
<feature type="binding site" evidence="1">
    <location>
        <position position="204"/>
    </location>
    <ligand>
        <name>UMP</name>
        <dbReference type="ChEBI" id="CHEBI:57865"/>
    </ligand>
</feature>
<feature type="binding site" evidence="1">
    <location>
        <begin position="206"/>
        <end position="212"/>
    </location>
    <ligand>
        <name>AMP</name>
        <dbReference type="ChEBI" id="CHEBI:456215"/>
    </ligand>
</feature>
<feature type="binding site" evidence="1">
    <location>
        <begin position="208"/>
        <end position="212"/>
    </location>
    <ligand>
        <name>UMP</name>
        <dbReference type="ChEBI" id="CHEBI:57865"/>
    </ligand>
</feature>
<feature type="sequence conflict" description="In Ref. 1; BAE22567/BAE40531/BAE36080." evidence="4" ref="1">
    <original>I</original>
    <variation>V</variation>
    <location>
        <position position="211"/>
    </location>
</feature>
<accession>Q91W78</accession>
<accession>Q3TU91</accession>
<sequence length="267" mass="30250">MSSAPLVGYSSSGSEDEAEAVAAGRSKPGTGFHRCGQNPVPSEKLPVPDSVLSMFPSTEEGPEDDSAKHGGRIRTFPHERGNWATHIYIPYEAKEDFRDLLDALLPRAQMFVPRLVLMEEFHVSLSQSVVLRHHWILPFVQVLKDRMASFQRFFFTANRVKIYTNQEKTRTFIGLEVSSGHAQFLDLVSEVDRAMKEFDLTTFYQDPSFHISLAWCVGDASLQLEGQCLQELQEIVDEFEDSEMLLRVLANQVRCKSGNKFFSMPLK</sequence>
<evidence type="ECO:0000250" key="1">
    <source>
        <dbReference type="UniProtKB" id="Q9BQ65"/>
    </source>
</evidence>
<evidence type="ECO:0000255" key="2">
    <source>
        <dbReference type="HAMAP-Rule" id="MF_03040"/>
    </source>
</evidence>
<evidence type="ECO:0000256" key="3">
    <source>
        <dbReference type="SAM" id="MobiDB-lite"/>
    </source>
</evidence>
<evidence type="ECO:0000305" key="4"/>
<evidence type="ECO:0000312" key="5">
    <source>
        <dbReference type="MGI" id="MGI:2142454"/>
    </source>
</evidence>
<protein>
    <recommendedName>
        <fullName evidence="4">U6 snRNA phosphodiesterase 1</fullName>
    </recommendedName>
    <alternativeName>
        <fullName evidence="1">3'-5' RNA exonuclease USB1</fullName>
        <ecNumber evidence="1">4.6.1.-</ecNumber>
    </alternativeName>
</protein>
<organism>
    <name type="scientific">Mus musculus</name>
    <name type="common">Mouse</name>
    <dbReference type="NCBI Taxonomy" id="10090"/>
    <lineage>
        <taxon>Eukaryota</taxon>
        <taxon>Metazoa</taxon>
        <taxon>Chordata</taxon>
        <taxon>Craniata</taxon>
        <taxon>Vertebrata</taxon>
        <taxon>Euteleostomi</taxon>
        <taxon>Mammalia</taxon>
        <taxon>Eutheria</taxon>
        <taxon>Euarchontoglires</taxon>
        <taxon>Glires</taxon>
        <taxon>Rodentia</taxon>
        <taxon>Myomorpha</taxon>
        <taxon>Muroidea</taxon>
        <taxon>Muridae</taxon>
        <taxon>Murinae</taxon>
        <taxon>Mus</taxon>
        <taxon>Mus</taxon>
    </lineage>
</organism>
<gene>
    <name evidence="2 5" type="primary">Usb1</name>
</gene>
<proteinExistence type="evidence at transcript level"/>
<comment type="function">
    <text evidence="1">3'-5' RNA exonuclease that trims the 3' end of oligo(U) and oligo(A) tracts of the pre-U6 small nuclear RNA (snRNA) molecule, leading to the formation of a mature U6 snRNA 3' end-terminated with a 2',3'-cyclic phosphate. Participates in the U6 snRNA 3' end processing that prevents U6 snRNA degradation. In addition also removes uridines from the 3' end of U6atac snRNA and possibly the vault RNA VTRNA1-1.</text>
</comment>
<comment type="catalytic activity">
    <reaction evidence="1">
        <text>a 3'-end uridylyl-uridine-RNA = a 3'-end 2',3'-cyclophospho-uridine-RNA + uridine</text>
        <dbReference type="Rhea" id="RHEA:46052"/>
        <dbReference type="Rhea" id="RHEA-COMP:17384"/>
        <dbReference type="Rhea" id="RHEA-COMP:17385"/>
        <dbReference type="ChEBI" id="CHEBI:16704"/>
        <dbReference type="ChEBI" id="CHEBI:85643"/>
        <dbReference type="ChEBI" id="CHEBI:85644"/>
    </reaction>
    <physiologicalReaction direction="left-to-right" evidence="1">
        <dbReference type="Rhea" id="RHEA:46053"/>
    </physiologicalReaction>
</comment>
<comment type="catalytic activity">
    <reaction evidence="1">
        <text>a 3'-end uridylyl-adenosine-RNA = a 3'-end 2',3'-cyclophospho-uridine-RNA + adenosine</text>
        <dbReference type="Rhea" id="RHEA:67896"/>
        <dbReference type="Rhea" id="RHEA-COMP:17385"/>
        <dbReference type="Rhea" id="RHEA-COMP:17386"/>
        <dbReference type="ChEBI" id="CHEBI:16335"/>
        <dbReference type="ChEBI" id="CHEBI:85644"/>
        <dbReference type="ChEBI" id="CHEBI:176518"/>
    </reaction>
    <physiologicalReaction direction="left-to-right" evidence="1">
        <dbReference type="Rhea" id="RHEA:67897"/>
    </physiologicalReaction>
</comment>
<comment type="subunit">
    <text evidence="1">Interacts with PLRG1, CDC5L and PRPF19.</text>
</comment>
<comment type="subcellular location">
    <subcellularLocation>
        <location evidence="2">Nucleus</location>
    </subcellularLocation>
</comment>
<comment type="similarity">
    <text evidence="2">Belongs to the 2H phosphoesterase superfamily. USB1 family.</text>
</comment>
<keyword id="KW-0378">Hydrolase</keyword>
<keyword id="KW-0456">Lyase</keyword>
<keyword id="KW-0540">Nuclease</keyword>
<keyword id="KW-0539">Nucleus</keyword>
<keyword id="KW-1185">Reference proteome</keyword>
<name>USB1_MOUSE</name>
<reference key="1">
    <citation type="journal article" date="2005" name="Science">
        <title>The transcriptional landscape of the mammalian genome.</title>
        <authorList>
            <person name="Carninci P."/>
            <person name="Kasukawa T."/>
            <person name="Katayama S."/>
            <person name="Gough J."/>
            <person name="Frith M.C."/>
            <person name="Maeda N."/>
            <person name="Oyama R."/>
            <person name="Ravasi T."/>
            <person name="Lenhard B."/>
            <person name="Wells C."/>
            <person name="Kodzius R."/>
            <person name="Shimokawa K."/>
            <person name="Bajic V.B."/>
            <person name="Brenner S.E."/>
            <person name="Batalov S."/>
            <person name="Forrest A.R."/>
            <person name="Zavolan M."/>
            <person name="Davis M.J."/>
            <person name="Wilming L.G."/>
            <person name="Aidinis V."/>
            <person name="Allen J.E."/>
            <person name="Ambesi-Impiombato A."/>
            <person name="Apweiler R."/>
            <person name="Aturaliya R.N."/>
            <person name="Bailey T.L."/>
            <person name="Bansal M."/>
            <person name="Baxter L."/>
            <person name="Beisel K.W."/>
            <person name="Bersano T."/>
            <person name="Bono H."/>
            <person name="Chalk A.M."/>
            <person name="Chiu K.P."/>
            <person name="Choudhary V."/>
            <person name="Christoffels A."/>
            <person name="Clutterbuck D.R."/>
            <person name="Crowe M.L."/>
            <person name="Dalla E."/>
            <person name="Dalrymple B.P."/>
            <person name="de Bono B."/>
            <person name="Della Gatta G."/>
            <person name="di Bernardo D."/>
            <person name="Down T."/>
            <person name="Engstrom P."/>
            <person name="Fagiolini M."/>
            <person name="Faulkner G."/>
            <person name="Fletcher C.F."/>
            <person name="Fukushima T."/>
            <person name="Furuno M."/>
            <person name="Futaki S."/>
            <person name="Gariboldi M."/>
            <person name="Georgii-Hemming P."/>
            <person name="Gingeras T.R."/>
            <person name="Gojobori T."/>
            <person name="Green R.E."/>
            <person name="Gustincich S."/>
            <person name="Harbers M."/>
            <person name="Hayashi Y."/>
            <person name="Hensch T.K."/>
            <person name="Hirokawa N."/>
            <person name="Hill D."/>
            <person name="Huminiecki L."/>
            <person name="Iacono M."/>
            <person name="Ikeo K."/>
            <person name="Iwama A."/>
            <person name="Ishikawa T."/>
            <person name="Jakt M."/>
            <person name="Kanapin A."/>
            <person name="Katoh M."/>
            <person name="Kawasawa Y."/>
            <person name="Kelso J."/>
            <person name="Kitamura H."/>
            <person name="Kitano H."/>
            <person name="Kollias G."/>
            <person name="Krishnan S.P."/>
            <person name="Kruger A."/>
            <person name="Kummerfeld S.K."/>
            <person name="Kurochkin I.V."/>
            <person name="Lareau L.F."/>
            <person name="Lazarevic D."/>
            <person name="Lipovich L."/>
            <person name="Liu J."/>
            <person name="Liuni S."/>
            <person name="McWilliam S."/>
            <person name="Madan Babu M."/>
            <person name="Madera M."/>
            <person name="Marchionni L."/>
            <person name="Matsuda H."/>
            <person name="Matsuzawa S."/>
            <person name="Miki H."/>
            <person name="Mignone F."/>
            <person name="Miyake S."/>
            <person name="Morris K."/>
            <person name="Mottagui-Tabar S."/>
            <person name="Mulder N."/>
            <person name="Nakano N."/>
            <person name="Nakauchi H."/>
            <person name="Ng P."/>
            <person name="Nilsson R."/>
            <person name="Nishiguchi S."/>
            <person name="Nishikawa S."/>
            <person name="Nori F."/>
            <person name="Ohara O."/>
            <person name="Okazaki Y."/>
            <person name="Orlando V."/>
            <person name="Pang K.C."/>
            <person name="Pavan W.J."/>
            <person name="Pavesi G."/>
            <person name="Pesole G."/>
            <person name="Petrovsky N."/>
            <person name="Piazza S."/>
            <person name="Reed J."/>
            <person name="Reid J.F."/>
            <person name="Ring B.Z."/>
            <person name="Ringwald M."/>
            <person name="Rost B."/>
            <person name="Ruan Y."/>
            <person name="Salzberg S.L."/>
            <person name="Sandelin A."/>
            <person name="Schneider C."/>
            <person name="Schoenbach C."/>
            <person name="Sekiguchi K."/>
            <person name="Semple C.A."/>
            <person name="Seno S."/>
            <person name="Sessa L."/>
            <person name="Sheng Y."/>
            <person name="Shibata Y."/>
            <person name="Shimada H."/>
            <person name="Shimada K."/>
            <person name="Silva D."/>
            <person name="Sinclair B."/>
            <person name="Sperling S."/>
            <person name="Stupka E."/>
            <person name="Sugiura K."/>
            <person name="Sultana R."/>
            <person name="Takenaka Y."/>
            <person name="Taki K."/>
            <person name="Tammoja K."/>
            <person name="Tan S.L."/>
            <person name="Tang S."/>
            <person name="Taylor M.S."/>
            <person name="Tegner J."/>
            <person name="Teichmann S.A."/>
            <person name="Ueda H.R."/>
            <person name="van Nimwegen E."/>
            <person name="Verardo R."/>
            <person name="Wei C.L."/>
            <person name="Yagi K."/>
            <person name="Yamanishi H."/>
            <person name="Zabarovsky E."/>
            <person name="Zhu S."/>
            <person name="Zimmer A."/>
            <person name="Hide W."/>
            <person name="Bult C."/>
            <person name="Grimmond S.M."/>
            <person name="Teasdale R.D."/>
            <person name="Liu E.T."/>
            <person name="Brusic V."/>
            <person name="Quackenbush J."/>
            <person name="Wahlestedt C."/>
            <person name="Mattick J.S."/>
            <person name="Hume D.A."/>
            <person name="Kai C."/>
            <person name="Sasaki D."/>
            <person name="Tomaru Y."/>
            <person name="Fukuda S."/>
            <person name="Kanamori-Katayama M."/>
            <person name="Suzuki M."/>
            <person name="Aoki J."/>
            <person name="Arakawa T."/>
            <person name="Iida J."/>
            <person name="Imamura K."/>
            <person name="Itoh M."/>
            <person name="Kato T."/>
            <person name="Kawaji H."/>
            <person name="Kawagashira N."/>
            <person name="Kawashima T."/>
            <person name="Kojima M."/>
            <person name="Kondo S."/>
            <person name="Konno H."/>
            <person name="Nakano K."/>
            <person name="Ninomiya N."/>
            <person name="Nishio T."/>
            <person name="Okada M."/>
            <person name="Plessy C."/>
            <person name="Shibata K."/>
            <person name="Shiraki T."/>
            <person name="Suzuki S."/>
            <person name="Tagami M."/>
            <person name="Waki K."/>
            <person name="Watahiki A."/>
            <person name="Okamura-Oho Y."/>
            <person name="Suzuki H."/>
            <person name="Kawai J."/>
            <person name="Hayashizaki Y."/>
        </authorList>
    </citation>
    <scope>NUCLEOTIDE SEQUENCE [LARGE SCALE MRNA]</scope>
    <source>
        <strain>C57BL/6J</strain>
        <tissue>Extraembryonic tissue</tissue>
        <tissue>Liver</tissue>
        <tissue>Muellerian duct</tissue>
        <tissue>Placenta</tissue>
    </source>
</reference>
<reference key="2">
    <citation type="journal article" date="2004" name="Genome Res.">
        <title>The status, quality, and expansion of the NIH full-length cDNA project: the Mammalian Gene Collection (MGC).</title>
        <authorList>
            <consortium name="The MGC Project Team"/>
        </authorList>
    </citation>
    <scope>NUCLEOTIDE SEQUENCE [LARGE SCALE MRNA]</scope>
    <source>
        <strain>FVB/N</strain>
        <tissue>Colon</tissue>
    </source>
</reference>
<dbReference type="EC" id="4.6.1.-" evidence="1"/>
<dbReference type="EMBL" id="AK135527">
    <property type="protein sequence ID" value="BAE22567.1"/>
    <property type="molecule type" value="mRNA"/>
</dbReference>
<dbReference type="EMBL" id="AK160901">
    <property type="protein sequence ID" value="BAE36080.1"/>
    <property type="molecule type" value="mRNA"/>
</dbReference>
<dbReference type="EMBL" id="AK168683">
    <property type="protein sequence ID" value="BAE40531.1"/>
    <property type="molecule type" value="mRNA"/>
</dbReference>
<dbReference type="EMBL" id="BC016418">
    <property type="protein sequence ID" value="AAH16418.1"/>
    <property type="molecule type" value="mRNA"/>
</dbReference>
<dbReference type="CCDS" id="CCDS22560.1"/>
<dbReference type="RefSeq" id="NP_598715.2">
    <property type="nucleotide sequence ID" value="NM_133954.2"/>
</dbReference>
<dbReference type="RefSeq" id="XP_017167985.1">
    <property type="nucleotide sequence ID" value="XM_017312496.1"/>
</dbReference>
<dbReference type="SMR" id="Q91W78"/>
<dbReference type="FunCoup" id="Q91W78">
    <property type="interactions" value="893"/>
</dbReference>
<dbReference type="STRING" id="10090.ENSMUSP00000034245"/>
<dbReference type="iPTMnet" id="Q91W78"/>
<dbReference type="PhosphoSitePlus" id="Q91W78"/>
<dbReference type="PaxDb" id="10090-ENSMUSP00000034245"/>
<dbReference type="ProteomicsDB" id="275397"/>
<dbReference type="Pumba" id="Q91W78"/>
<dbReference type="GeneID" id="101985"/>
<dbReference type="KEGG" id="mmu:101985"/>
<dbReference type="UCSC" id="uc009myg.2">
    <property type="organism name" value="mouse"/>
</dbReference>
<dbReference type="AGR" id="MGI:2142454"/>
<dbReference type="CTD" id="79650"/>
<dbReference type="MGI" id="MGI:2142454">
    <property type="gene designation" value="Usb1"/>
</dbReference>
<dbReference type="eggNOG" id="KOG3102">
    <property type="taxonomic scope" value="Eukaryota"/>
</dbReference>
<dbReference type="InParanoid" id="Q91W78"/>
<dbReference type="OrthoDB" id="49151at2759"/>
<dbReference type="PhylomeDB" id="Q91W78"/>
<dbReference type="TreeFam" id="TF324364"/>
<dbReference type="BioGRID-ORCS" id="101985">
    <property type="hits" value="5 hits in 79 CRISPR screens"/>
</dbReference>
<dbReference type="PRO" id="PR:Q91W78"/>
<dbReference type="Proteomes" id="UP000000589">
    <property type="component" value="Unplaced"/>
</dbReference>
<dbReference type="RNAct" id="Q91W78">
    <property type="molecule type" value="protein"/>
</dbReference>
<dbReference type="GO" id="GO:0005634">
    <property type="term" value="C:nucleus"/>
    <property type="evidence" value="ECO:0000250"/>
    <property type="project" value="UniProtKB"/>
</dbReference>
<dbReference type="GO" id="GO:0000175">
    <property type="term" value="F:3'-5'-RNA exonuclease activity"/>
    <property type="evidence" value="ECO:0000250"/>
    <property type="project" value="UniProtKB"/>
</dbReference>
<dbReference type="GO" id="GO:0016829">
    <property type="term" value="F:lyase activity"/>
    <property type="evidence" value="ECO:0007669"/>
    <property type="project" value="UniProtKB-KW"/>
</dbReference>
<dbReference type="GO" id="GO:1990838">
    <property type="term" value="F:poly(U)-specific exoribonuclease activity, producing 3' uridine cyclic phosphate ends"/>
    <property type="evidence" value="ECO:0000250"/>
    <property type="project" value="UniProtKB"/>
</dbReference>
<dbReference type="GO" id="GO:0008380">
    <property type="term" value="P:RNA splicing"/>
    <property type="evidence" value="ECO:0000250"/>
    <property type="project" value="UniProtKB"/>
</dbReference>
<dbReference type="GO" id="GO:0034472">
    <property type="term" value="P:snRNA 3'-end processing"/>
    <property type="evidence" value="ECO:0000250"/>
    <property type="project" value="UniProtKB"/>
</dbReference>
<dbReference type="GO" id="GO:0034477">
    <property type="term" value="P:U6 snRNA 3'-end processing"/>
    <property type="evidence" value="ECO:0000250"/>
    <property type="project" value="UniProtKB"/>
</dbReference>
<dbReference type="FunFam" id="3.90.1140.10:FF:000006">
    <property type="entry name" value="U6 snRNA phosphodiesterase"/>
    <property type="match status" value="1"/>
</dbReference>
<dbReference type="Gene3D" id="3.90.1140.10">
    <property type="entry name" value="Cyclic phosphodiesterase"/>
    <property type="match status" value="1"/>
</dbReference>
<dbReference type="HAMAP" id="MF_03040">
    <property type="entry name" value="USB1"/>
    <property type="match status" value="1"/>
</dbReference>
<dbReference type="InterPro" id="IPR009097">
    <property type="entry name" value="Cyclic_Pdiesterase"/>
</dbReference>
<dbReference type="InterPro" id="IPR027521">
    <property type="entry name" value="Usb1"/>
</dbReference>
<dbReference type="PANTHER" id="PTHR13522">
    <property type="entry name" value="U6 SNRNA PHOSPHODIESTERASE 1"/>
    <property type="match status" value="1"/>
</dbReference>
<dbReference type="PANTHER" id="PTHR13522:SF3">
    <property type="entry name" value="U6 SNRNA PHOSPHODIESTERASE 1"/>
    <property type="match status" value="1"/>
</dbReference>
<dbReference type="Pfam" id="PF09749">
    <property type="entry name" value="HVSL"/>
    <property type="match status" value="1"/>
</dbReference>
<dbReference type="SUPFAM" id="SSF55144">
    <property type="entry name" value="LigT-like"/>
    <property type="match status" value="1"/>
</dbReference>